<name>NHR10_CAEEL</name>
<accession>P41999</accession>
<gene>
    <name type="primary">nhr-10</name>
    <name type="ORF">B0280.8</name>
</gene>
<dbReference type="EMBL" id="FO080148">
    <property type="protein sequence ID" value="CCD61604.1"/>
    <property type="molecule type" value="Genomic_DNA"/>
</dbReference>
<dbReference type="PIR" id="T15302">
    <property type="entry name" value="T15302"/>
</dbReference>
<dbReference type="RefSeq" id="NP_498554.1">
    <property type="nucleotide sequence ID" value="NM_066153.7"/>
</dbReference>
<dbReference type="SMR" id="P41999"/>
<dbReference type="BioGRID" id="41205">
    <property type="interactions" value="7"/>
</dbReference>
<dbReference type="DIP" id="DIP-25058N"/>
<dbReference type="FunCoup" id="P41999">
    <property type="interactions" value="12"/>
</dbReference>
<dbReference type="IntAct" id="P41999">
    <property type="interactions" value="4"/>
</dbReference>
<dbReference type="STRING" id="6239.B0280.8.1"/>
<dbReference type="PaxDb" id="6239-B0280.8"/>
<dbReference type="PeptideAtlas" id="P41999"/>
<dbReference type="EnsemblMetazoa" id="B0280.8.1">
    <property type="protein sequence ID" value="B0280.8.1"/>
    <property type="gene ID" value="WBGene00003609"/>
</dbReference>
<dbReference type="GeneID" id="175993"/>
<dbReference type="KEGG" id="cel:CELE_B0280.8"/>
<dbReference type="UCSC" id="B0280.8">
    <property type="organism name" value="c. elegans"/>
</dbReference>
<dbReference type="AGR" id="WB:WBGene00003609"/>
<dbReference type="CTD" id="175993"/>
<dbReference type="WormBase" id="B0280.8">
    <property type="protein sequence ID" value="CE00815"/>
    <property type="gene ID" value="WBGene00003609"/>
    <property type="gene designation" value="nhr-10"/>
</dbReference>
<dbReference type="eggNOG" id="KOG3575">
    <property type="taxonomic scope" value="Eukaryota"/>
</dbReference>
<dbReference type="HOGENOM" id="CLU_007368_3_3_1"/>
<dbReference type="InParanoid" id="P41999"/>
<dbReference type="OMA" id="RTIMKNQ"/>
<dbReference type="OrthoDB" id="5799427at2759"/>
<dbReference type="PhylomeDB" id="P41999"/>
<dbReference type="Reactome" id="R-CEL-383280">
    <property type="pathway name" value="Nuclear Receptor transcription pathway"/>
</dbReference>
<dbReference type="PRO" id="PR:P41999"/>
<dbReference type="Proteomes" id="UP000001940">
    <property type="component" value="Chromosome III"/>
</dbReference>
<dbReference type="Bgee" id="WBGene00003609">
    <property type="expression patterns" value="Expressed in embryo and 4 other cell types or tissues"/>
</dbReference>
<dbReference type="GO" id="GO:0000785">
    <property type="term" value="C:chromatin"/>
    <property type="evidence" value="ECO:0000315"/>
    <property type="project" value="UniProtKB"/>
</dbReference>
<dbReference type="GO" id="GO:0005634">
    <property type="term" value="C:nucleus"/>
    <property type="evidence" value="ECO:0007669"/>
    <property type="project" value="UniProtKB-SubCell"/>
</dbReference>
<dbReference type="GO" id="GO:0004879">
    <property type="term" value="F:nuclear receptor activity"/>
    <property type="evidence" value="ECO:0000318"/>
    <property type="project" value="GO_Central"/>
</dbReference>
<dbReference type="GO" id="GO:0000978">
    <property type="term" value="F:RNA polymerase II cis-regulatory region sequence-specific DNA binding"/>
    <property type="evidence" value="ECO:0000315"/>
    <property type="project" value="UniProtKB"/>
</dbReference>
<dbReference type="GO" id="GO:0008270">
    <property type="term" value="F:zinc ion binding"/>
    <property type="evidence" value="ECO:0007669"/>
    <property type="project" value="UniProtKB-KW"/>
</dbReference>
<dbReference type="GO" id="GO:0030154">
    <property type="term" value="P:cell differentiation"/>
    <property type="evidence" value="ECO:0000318"/>
    <property type="project" value="GO_Central"/>
</dbReference>
<dbReference type="GO" id="GO:0019543">
    <property type="term" value="P:propionate catabolic process"/>
    <property type="evidence" value="ECO:0000315"/>
    <property type="project" value="UniProtKB"/>
</dbReference>
<dbReference type="GO" id="GO:0006357">
    <property type="term" value="P:regulation of transcription by RNA polymerase II"/>
    <property type="evidence" value="ECO:0000315"/>
    <property type="project" value="UniProtKB"/>
</dbReference>
<dbReference type="CDD" id="cd06960">
    <property type="entry name" value="NR_DBD_HNF4A"/>
    <property type="match status" value="1"/>
</dbReference>
<dbReference type="CDD" id="cd06157">
    <property type="entry name" value="NR_LBD"/>
    <property type="match status" value="1"/>
</dbReference>
<dbReference type="FunFam" id="3.30.50.10:FF:000030">
    <property type="entry name" value="Nuclear Hormone Receptor family"/>
    <property type="match status" value="1"/>
</dbReference>
<dbReference type="Gene3D" id="3.30.50.10">
    <property type="entry name" value="Erythroid Transcription Factor GATA-1, subunit A"/>
    <property type="match status" value="1"/>
</dbReference>
<dbReference type="Gene3D" id="1.10.565.10">
    <property type="entry name" value="Retinoid X Receptor"/>
    <property type="match status" value="1"/>
</dbReference>
<dbReference type="InterPro" id="IPR049636">
    <property type="entry name" value="HNF4-like_DBD"/>
</dbReference>
<dbReference type="InterPro" id="IPR035500">
    <property type="entry name" value="NHR-like_dom_sf"/>
</dbReference>
<dbReference type="InterPro" id="IPR000536">
    <property type="entry name" value="Nucl_hrmn_rcpt_lig-bd"/>
</dbReference>
<dbReference type="InterPro" id="IPR050274">
    <property type="entry name" value="Nuclear_hormone_rcpt_NR2"/>
</dbReference>
<dbReference type="InterPro" id="IPR001723">
    <property type="entry name" value="Nuclear_hrmn_rcpt"/>
</dbReference>
<dbReference type="InterPro" id="IPR001628">
    <property type="entry name" value="Znf_hrmn_rcpt"/>
</dbReference>
<dbReference type="InterPro" id="IPR013088">
    <property type="entry name" value="Znf_NHR/GATA"/>
</dbReference>
<dbReference type="PANTHER" id="PTHR24083">
    <property type="entry name" value="NUCLEAR HORMONE RECEPTOR"/>
    <property type="match status" value="1"/>
</dbReference>
<dbReference type="Pfam" id="PF00104">
    <property type="entry name" value="Hormone_recep"/>
    <property type="match status" value="1"/>
</dbReference>
<dbReference type="Pfam" id="PF00105">
    <property type="entry name" value="zf-C4"/>
    <property type="match status" value="1"/>
</dbReference>
<dbReference type="PRINTS" id="PR00398">
    <property type="entry name" value="STRDHORMONER"/>
</dbReference>
<dbReference type="PRINTS" id="PR00047">
    <property type="entry name" value="STROIDFINGER"/>
</dbReference>
<dbReference type="SMART" id="SM00430">
    <property type="entry name" value="HOLI"/>
    <property type="match status" value="1"/>
</dbReference>
<dbReference type="SMART" id="SM00399">
    <property type="entry name" value="ZnF_C4"/>
    <property type="match status" value="1"/>
</dbReference>
<dbReference type="SUPFAM" id="SSF57716">
    <property type="entry name" value="Glucocorticoid receptor-like (DNA-binding domain)"/>
    <property type="match status" value="1"/>
</dbReference>
<dbReference type="SUPFAM" id="SSF48508">
    <property type="entry name" value="Nuclear receptor ligand-binding domain"/>
    <property type="match status" value="1"/>
</dbReference>
<dbReference type="PROSITE" id="PS51843">
    <property type="entry name" value="NR_LBD"/>
    <property type="match status" value="1"/>
</dbReference>
<dbReference type="PROSITE" id="PS00031">
    <property type="entry name" value="NUCLEAR_REC_DBD_1"/>
    <property type="match status" value="1"/>
</dbReference>
<dbReference type="PROSITE" id="PS51030">
    <property type="entry name" value="NUCLEAR_REC_DBD_2"/>
    <property type="match status" value="1"/>
</dbReference>
<keyword id="KW-0238">DNA-binding</keyword>
<keyword id="KW-0479">Metal-binding</keyword>
<keyword id="KW-0539">Nucleus</keyword>
<keyword id="KW-0675">Receptor</keyword>
<keyword id="KW-1185">Reference proteome</keyword>
<keyword id="KW-0804">Transcription</keyword>
<keyword id="KW-0805">Transcription regulation</keyword>
<keyword id="KW-0862">Zinc</keyword>
<keyword id="KW-0863">Zinc-finger</keyword>
<reference key="1">
    <citation type="journal article" date="1998" name="Science">
        <title>Genome sequence of the nematode C. elegans: a platform for investigating biology.</title>
        <authorList>
            <consortium name="The C. elegans sequencing consortium"/>
        </authorList>
    </citation>
    <scope>NUCLEOTIDE SEQUENCE [LARGE SCALE GENOMIC DNA]</scope>
    <source>
        <strain>Bristol N2</strain>
    </source>
</reference>
<reference evidence="4" key="2">
    <citation type="journal article" date="2019" name="Cell Rep.">
        <title>A Persistence Detector for Metabolic Network Rewiring in an Animal.</title>
        <authorList>
            <person name="Bulcha J.T."/>
            <person name="Giese G.E."/>
            <person name="Ali M.Z."/>
            <person name="Lee Y.U."/>
            <person name="Walker M.D."/>
            <person name="Holdorf A.D."/>
            <person name="Yilmaz L.S."/>
            <person name="Brewster R.C."/>
            <person name="Walhout A.J.M."/>
        </authorList>
    </citation>
    <scope>FUNCTION</scope>
    <scope>DISRUPTION PHENOTYPE</scope>
</reference>
<sequence>MTGGGPSSNNSSQPEEVCLVCSDISTGYHYGVPSCNGCKTFFRRTIMKNQTFSCQFQGKCPVDKSIRCACRHCRFEKCLQVGMDRNAIQQNRDPIGYTKRTRRYPPIKKVEASDECSPAMVSENDRSEDNFLTLLSSTEQKCCALRLAEYMPSRTLIEAVVSDCLLTDEVFMAEHAILSPRHRVTSLRFANQSDYHYWHERDWFVMIEWAKTLPVFQSLPFTDKLALLRHSAITYPSLVHVFNSPDHGLDTIVFPDGAYFDRTPEPTRPLGFNKKKYQMLDQLLKPMRSMEIDMTEFAAFKAIFFLNPDADDVDSNAKKTLSDGRSAITNALYRYMVKKKGAEDAGDRFGRLLLLGTVLATMAVEMKEAVLVADFFDQIQFSTFAKQLLFGIKTE</sequence>
<evidence type="ECO:0000255" key="1">
    <source>
        <dbReference type="PROSITE-ProRule" id="PRU00407"/>
    </source>
</evidence>
<evidence type="ECO:0000255" key="2">
    <source>
        <dbReference type="PROSITE-ProRule" id="PRU01189"/>
    </source>
</evidence>
<evidence type="ECO:0000269" key="3">
    <source>
    </source>
</evidence>
<evidence type="ECO:0000305" key="4"/>
<feature type="chain" id="PRO_0000053763" description="Nuclear hormone receptor family member nhr-10">
    <location>
        <begin position="1"/>
        <end position="395"/>
    </location>
</feature>
<feature type="domain" description="NR LBD" evidence="2">
    <location>
        <begin position="152"/>
        <end position="392"/>
    </location>
</feature>
<feature type="DNA-binding region" description="Nuclear receptor" evidence="1">
    <location>
        <begin position="15"/>
        <end position="90"/>
    </location>
</feature>
<feature type="zinc finger region" description="NR C4-type" evidence="1">
    <location>
        <begin position="18"/>
        <end position="38"/>
    </location>
</feature>
<feature type="zinc finger region" description="NR C4-type" evidence="1">
    <location>
        <begin position="54"/>
        <end position="78"/>
    </location>
</feature>
<organism>
    <name type="scientific">Caenorhabditis elegans</name>
    <dbReference type="NCBI Taxonomy" id="6239"/>
    <lineage>
        <taxon>Eukaryota</taxon>
        <taxon>Metazoa</taxon>
        <taxon>Ecdysozoa</taxon>
        <taxon>Nematoda</taxon>
        <taxon>Chromadorea</taxon>
        <taxon>Rhabditida</taxon>
        <taxon>Rhabditina</taxon>
        <taxon>Rhabditomorpha</taxon>
        <taxon>Rhabditoidea</taxon>
        <taxon>Rhabditidae</taxon>
        <taxon>Peloderinae</taxon>
        <taxon>Caenorhabditis</taxon>
    </lineage>
</organism>
<proteinExistence type="inferred from homology"/>
<protein>
    <recommendedName>
        <fullName>Nuclear hormone receptor family member nhr-10</fullName>
    </recommendedName>
</protein>
<comment type="function">
    <text evidence="3">Probable transcription factor that acts in a feed-forward loop with nhr-68 to activate genes involved in the vitamin B12-independent breakdown of the short-chain fatty acid propionate (PubMed:30625328). This pathway is triggered in response to a diet low in vitamin B12, when canonical vitamin B12-dependent propionate breakdown cannot function; the resulting accumulation of propionate is probably sensed by nhr-10 and/or nhr-68 (PubMed:30625328).</text>
</comment>
<comment type="subcellular location">
    <subcellularLocation>
        <location evidence="1">Nucleus</location>
    </subcellularLocation>
</comment>
<comment type="disruption phenotype">
    <text evidence="3">RNAi-mediated knockdown abolishes expression of acdh-1 when diet is supplemented with 5 nM vitamin B12 and high levels (40 mM) of propionate (PubMed:30625328). RNAi-mediated knockdown reduces expression of nhr-68 (PubMed:30625328).</text>
</comment>
<comment type="similarity">
    <text evidence="4">Belongs to the nuclear hormone receptor family.</text>
</comment>